<accession>Q98F72</accession>
<sequence>MGDAIRIIGIDPGLRRTGWGIVESLGNSLRFVASGTVRSEDKAALATRLCQLHDGLAEVLHAAMPHEAAVEQTFVNKDAVATLKLGQARGIAMLVPARAGLVVAEYAPNAVKKAVIGVGHGDKKQIHMMVKVLLPKATFDTEHAADALAIAICHAHHRQSAAYRMALAG</sequence>
<protein>
    <recommendedName>
        <fullName evidence="1">Crossover junction endodeoxyribonuclease RuvC</fullName>
        <ecNumber evidence="1">3.1.21.10</ecNumber>
    </recommendedName>
    <alternativeName>
        <fullName evidence="1">Holliday junction nuclease RuvC</fullName>
    </alternativeName>
    <alternativeName>
        <fullName evidence="1">Holliday junction resolvase RuvC</fullName>
    </alternativeName>
</protein>
<gene>
    <name evidence="1" type="primary">ruvC</name>
    <name type="ordered locus">mll3901</name>
</gene>
<comment type="function">
    <text evidence="1">The RuvA-RuvB-RuvC complex processes Holliday junction (HJ) DNA during genetic recombination and DNA repair. Endonuclease that resolves HJ intermediates. Cleaves cruciform DNA by making single-stranded nicks across the HJ at symmetrical positions within the homologous arms, yielding a 5'-phosphate and a 3'-hydroxyl group; requires a central core of homology in the junction. The consensus cleavage sequence is 5'-(A/T)TT(C/G)-3'. Cleavage occurs on the 3'-side of the TT dinucleotide at the point of strand exchange. HJ branch migration catalyzed by RuvA-RuvB allows RuvC to scan DNA until it finds its consensus sequence, where it cleaves and resolves the cruciform DNA.</text>
</comment>
<comment type="catalytic activity">
    <reaction evidence="1">
        <text>Endonucleolytic cleavage at a junction such as a reciprocal single-stranded crossover between two homologous DNA duplexes (Holliday junction).</text>
        <dbReference type="EC" id="3.1.21.10"/>
    </reaction>
</comment>
<comment type="cofactor">
    <cofactor evidence="1">
        <name>Mg(2+)</name>
        <dbReference type="ChEBI" id="CHEBI:18420"/>
    </cofactor>
    <text evidence="1">Binds 2 Mg(2+) ion per subunit.</text>
</comment>
<comment type="subunit">
    <text evidence="1">Homodimer which binds Holliday junction (HJ) DNA. The HJ becomes 2-fold symmetrical on binding to RuvC with unstacked arms; it has a different conformation from HJ DNA in complex with RuvA. In the full resolvosome a probable DNA-RuvA(4)-RuvB(12)-RuvC(2) complex forms which resolves the HJ.</text>
</comment>
<comment type="subcellular location">
    <subcellularLocation>
        <location evidence="1">Cytoplasm</location>
    </subcellularLocation>
</comment>
<comment type="similarity">
    <text evidence="1">Belongs to the RuvC family.</text>
</comment>
<name>RUVC_RHILO</name>
<feature type="chain" id="PRO_0000183125" description="Crossover junction endodeoxyribonuclease RuvC">
    <location>
        <begin position="1"/>
        <end position="169"/>
    </location>
</feature>
<feature type="active site" evidence="1">
    <location>
        <position position="11"/>
    </location>
</feature>
<feature type="active site" evidence="1">
    <location>
        <position position="71"/>
    </location>
</feature>
<feature type="active site" evidence="1">
    <location>
        <position position="143"/>
    </location>
</feature>
<feature type="binding site" evidence="1">
    <location>
        <position position="11"/>
    </location>
    <ligand>
        <name>Mg(2+)</name>
        <dbReference type="ChEBI" id="CHEBI:18420"/>
        <label>1</label>
    </ligand>
</feature>
<feature type="binding site" evidence="1">
    <location>
        <position position="71"/>
    </location>
    <ligand>
        <name>Mg(2+)</name>
        <dbReference type="ChEBI" id="CHEBI:18420"/>
        <label>2</label>
    </ligand>
</feature>
<feature type="binding site" evidence="1">
    <location>
        <position position="143"/>
    </location>
    <ligand>
        <name>Mg(2+)</name>
        <dbReference type="ChEBI" id="CHEBI:18420"/>
        <label>1</label>
    </ligand>
</feature>
<dbReference type="EC" id="3.1.21.10" evidence="1"/>
<dbReference type="EMBL" id="BA000012">
    <property type="protein sequence ID" value="BAB50695.1"/>
    <property type="molecule type" value="Genomic_DNA"/>
</dbReference>
<dbReference type="RefSeq" id="WP_010912038.1">
    <property type="nucleotide sequence ID" value="NC_002678.2"/>
</dbReference>
<dbReference type="SMR" id="Q98F72"/>
<dbReference type="KEGG" id="mlo:mll3901"/>
<dbReference type="PATRIC" id="fig|266835.9.peg.3105"/>
<dbReference type="eggNOG" id="COG0817">
    <property type="taxonomic scope" value="Bacteria"/>
</dbReference>
<dbReference type="HOGENOM" id="CLU_091257_1_0_5"/>
<dbReference type="Proteomes" id="UP000000552">
    <property type="component" value="Chromosome"/>
</dbReference>
<dbReference type="GO" id="GO:0005737">
    <property type="term" value="C:cytoplasm"/>
    <property type="evidence" value="ECO:0007669"/>
    <property type="project" value="UniProtKB-SubCell"/>
</dbReference>
<dbReference type="GO" id="GO:0048476">
    <property type="term" value="C:Holliday junction resolvase complex"/>
    <property type="evidence" value="ECO:0007669"/>
    <property type="project" value="UniProtKB-UniRule"/>
</dbReference>
<dbReference type="GO" id="GO:0008821">
    <property type="term" value="F:crossover junction DNA endonuclease activity"/>
    <property type="evidence" value="ECO:0007669"/>
    <property type="project" value="UniProtKB-UniRule"/>
</dbReference>
<dbReference type="GO" id="GO:0003677">
    <property type="term" value="F:DNA binding"/>
    <property type="evidence" value="ECO:0007669"/>
    <property type="project" value="UniProtKB-KW"/>
</dbReference>
<dbReference type="GO" id="GO:0000287">
    <property type="term" value="F:magnesium ion binding"/>
    <property type="evidence" value="ECO:0007669"/>
    <property type="project" value="UniProtKB-UniRule"/>
</dbReference>
<dbReference type="GO" id="GO:0006310">
    <property type="term" value="P:DNA recombination"/>
    <property type="evidence" value="ECO:0007669"/>
    <property type="project" value="UniProtKB-UniRule"/>
</dbReference>
<dbReference type="GO" id="GO:0006281">
    <property type="term" value="P:DNA repair"/>
    <property type="evidence" value="ECO:0007669"/>
    <property type="project" value="UniProtKB-UniRule"/>
</dbReference>
<dbReference type="CDD" id="cd16962">
    <property type="entry name" value="RuvC"/>
    <property type="match status" value="1"/>
</dbReference>
<dbReference type="FunFam" id="3.30.420.10:FF:000002">
    <property type="entry name" value="Crossover junction endodeoxyribonuclease RuvC"/>
    <property type="match status" value="1"/>
</dbReference>
<dbReference type="Gene3D" id="3.30.420.10">
    <property type="entry name" value="Ribonuclease H-like superfamily/Ribonuclease H"/>
    <property type="match status" value="1"/>
</dbReference>
<dbReference type="HAMAP" id="MF_00034">
    <property type="entry name" value="RuvC"/>
    <property type="match status" value="1"/>
</dbReference>
<dbReference type="InterPro" id="IPR012337">
    <property type="entry name" value="RNaseH-like_sf"/>
</dbReference>
<dbReference type="InterPro" id="IPR036397">
    <property type="entry name" value="RNaseH_sf"/>
</dbReference>
<dbReference type="InterPro" id="IPR002176">
    <property type="entry name" value="X-over_junc_endoDNase_RuvC"/>
</dbReference>
<dbReference type="NCBIfam" id="TIGR00228">
    <property type="entry name" value="ruvC"/>
    <property type="match status" value="1"/>
</dbReference>
<dbReference type="PANTHER" id="PTHR30194">
    <property type="entry name" value="CROSSOVER JUNCTION ENDODEOXYRIBONUCLEASE RUVC"/>
    <property type="match status" value="1"/>
</dbReference>
<dbReference type="PANTHER" id="PTHR30194:SF3">
    <property type="entry name" value="CROSSOVER JUNCTION ENDODEOXYRIBONUCLEASE RUVC"/>
    <property type="match status" value="1"/>
</dbReference>
<dbReference type="Pfam" id="PF02075">
    <property type="entry name" value="RuvC"/>
    <property type="match status" value="1"/>
</dbReference>
<dbReference type="PRINTS" id="PR00696">
    <property type="entry name" value="RSOLVASERUVC"/>
</dbReference>
<dbReference type="SUPFAM" id="SSF53098">
    <property type="entry name" value="Ribonuclease H-like"/>
    <property type="match status" value="1"/>
</dbReference>
<proteinExistence type="inferred from homology"/>
<organism>
    <name type="scientific">Mesorhizobium japonicum (strain LMG 29417 / CECT 9101 / MAFF 303099)</name>
    <name type="common">Mesorhizobium loti (strain MAFF 303099)</name>
    <dbReference type="NCBI Taxonomy" id="266835"/>
    <lineage>
        <taxon>Bacteria</taxon>
        <taxon>Pseudomonadati</taxon>
        <taxon>Pseudomonadota</taxon>
        <taxon>Alphaproteobacteria</taxon>
        <taxon>Hyphomicrobiales</taxon>
        <taxon>Phyllobacteriaceae</taxon>
        <taxon>Mesorhizobium</taxon>
    </lineage>
</organism>
<keyword id="KW-0963">Cytoplasm</keyword>
<keyword id="KW-0227">DNA damage</keyword>
<keyword id="KW-0233">DNA recombination</keyword>
<keyword id="KW-0234">DNA repair</keyword>
<keyword id="KW-0238">DNA-binding</keyword>
<keyword id="KW-0255">Endonuclease</keyword>
<keyword id="KW-0378">Hydrolase</keyword>
<keyword id="KW-0460">Magnesium</keyword>
<keyword id="KW-0479">Metal-binding</keyword>
<keyword id="KW-0540">Nuclease</keyword>
<reference key="1">
    <citation type="journal article" date="2000" name="DNA Res.">
        <title>Complete genome structure of the nitrogen-fixing symbiotic bacterium Mesorhizobium loti.</title>
        <authorList>
            <person name="Kaneko T."/>
            <person name="Nakamura Y."/>
            <person name="Sato S."/>
            <person name="Asamizu E."/>
            <person name="Kato T."/>
            <person name="Sasamoto S."/>
            <person name="Watanabe A."/>
            <person name="Idesawa K."/>
            <person name="Ishikawa A."/>
            <person name="Kawashima K."/>
            <person name="Kimura T."/>
            <person name="Kishida Y."/>
            <person name="Kiyokawa C."/>
            <person name="Kohara M."/>
            <person name="Matsumoto M."/>
            <person name="Matsuno A."/>
            <person name="Mochizuki Y."/>
            <person name="Nakayama S."/>
            <person name="Nakazaki N."/>
            <person name="Shimpo S."/>
            <person name="Sugimoto M."/>
            <person name="Takeuchi C."/>
            <person name="Yamada M."/>
            <person name="Tabata S."/>
        </authorList>
    </citation>
    <scope>NUCLEOTIDE SEQUENCE [LARGE SCALE GENOMIC DNA]</scope>
    <source>
        <strain>LMG 29417 / CECT 9101 / MAFF 303099</strain>
    </source>
</reference>
<evidence type="ECO:0000255" key="1">
    <source>
        <dbReference type="HAMAP-Rule" id="MF_00034"/>
    </source>
</evidence>